<sequence length="818" mass="92253">METIKRMIWPKKEIFVGDFATGVNRTVPVNIFQLVCRVVLRYMRTGKIECDSDSMTKFIVELLKTDCAAKWEWFMKRRQRGDYIVPLSIASIPIIPLLSYATRVRAVSVKAFGNELSFNVRVPRPSVPKKGLLLRLAAGLALAPICALAVYATLPREKLSVFKLRTEARAHMEDEREATDCLVVEPARELKGKDGEDLLTGSRLTKVIASTGRPRRRPYAAKIAQVARAKVGYLKNSPENRLIYQRVMIEIMDKDCVRYVDRDVILPLAIGCCFVYPDGVEESAALWGSQESLGVKXGGLVRLPGVVTQINRDIPSDVLLPQEVLEVRTGPPNAKDRNIFMVAGCPSQARFLVHNHCLKNLKRGLVERVFCVERNGKLARTPQPTKGAFGRLSPFRKAVCEKVGVAHRLGYDGFLSYYSGAKLRTYTRAVESLHITPVSERDSHLTTFVKAEKISTSKGDPAPRVIQPRNPRYNVELGRYLRHMESKLMKAVDGVFGETTCIKGYTADEVGAIFRAKWDRFDKPVAIGLDASRFDQHCSVEALQYEHSFYRAMYPGNKLLGKLLEWQLHNKGKGYVPDGTITYRKEGCRMSGDINTSLGNYLLMCAMVHGYMRHLGINEFSLANCGDDCVLIVERRNLKQIQRTLPEYFLNLGYTMKVEQPVFQLEEVEFCQAHPVQFQGGWKMVRNVRTAMSKDVHCVNNIRDLATRRAWSNAQHHGGLALSAGIPVVETFYSRFKLYDVPRKHQRIDTVTNVHKWRGSGGSYVVTPESRASFWAAFGLTGDEQLALEDRLERWEMDLFGEEGVDAHEPSILDSAVA</sequence>
<reference key="1">
    <citation type="journal article" date="1990" name="Virology">
        <title>The complete genome structure and synthesis of infectious RNA from clones of tomato bushy stunt virus.</title>
        <authorList>
            <person name="Hearne P.Q."/>
            <person name="Knorr D.A."/>
            <person name="Hillman B.I."/>
            <person name="Morris T.J."/>
        </authorList>
    </citation>
    <scope>NUCLEOTIDE SEQUENCE [GENOMIC RNA]</scope>
</reference>
<feature type="chain" id="PRO_0000041336" description="RNA-directed RNA polymerase">
    <location>
        <begin position="1"/>
        <end position="818"/>
    </location>
</feature>
<feature type="chain" id="PRO_0000041337" description="Protein p33">
    <location>
        <begin position="1"/>
        <end position="296"/>
    </location>
</feature>
<feature type="domain" description="RdRp catalytic" evidence="2">
    <location>
        <begin position="524"/>
        <end position="641"/>
    </location>
</feature>
<organism>
    <name type="scientific">Tomato bushy stunt virus (strain Cherry)</name>
    <name type="common">TBSV</name>
    <dbReference type="NCBI Taxonomy" id="12147"/>
    <lineage>
        <taxon>Viruses</taxon>
        <taxon>Riboviria</taxon>
        <taxon>Orthornavirae</taxon>
        <taxon>Kitrinoviricota</taxon>
        <taxon>Tolucaviricetes</taxon>
        <taxon>Tolivirales</taxon>
        <taxon>Tombusviridae</taxon>
        <taxon>Procedovirinae</taxon>
        <taxon>Tombusvirus</taxon>
        <taxon>Tombusvirus lycopersici</taxon>
    </lineage>
</organism>
<gene>
    <name type="ORF">ORF1</name>
</gene>
<proteinExistence type="inferred from homology"/>
<accession>P15962</accession>
<accession>Q88485</accession>
<organismHost>
    <name type="scientific">Capsicum annuum</name>
    <name type="common">Capsicum pepper</name>
    <dbReference type="NCBI Taxonomy" id="4072"/>
</organismHost>
<organismHost>
    <name type="scientific">Malus</name>
    <dbReference type="NCBI Taxonomy" id="3749"/>
</organismHost>
<organismHost>
    <name type="scientific">Pyrus</name>
    <name type="common">pears</name>
    <dbReference type="NCBI Taxonomy" id="3766"/>
</organismHost>
<organismHost>
    <name type="scientific">Solanum lycopersicum</name>
    <name type="common">Tomato</name>
    <name type="synonym">Lycopersicon esculentum</name>
    <dbReference type="NCBI Taxonomy" id="4081"/>
</organismHost>
<organismHost>
    <name type="scientific">Solanum melongena</name>
    <name type="common">eggplant</name>
    <dbReference type="NCBI Taxonomy" id="4111"/>
</organismHost>
<organismHost>
    <name type="scientific">Tolmiea menziesii</name>
    <dbReference type="NCBI Taxonomy" id="29777"/>
</organismHost>
<organismHost>
    <name type="scientific">Tulipa</name>
    <dbReference type="NCBI Taxonomy" id="13305"/>
</organismHost>
<dbReference type="EC" id="2.7.7.48"/>
<dbReference type="EMBL" id="M21958">
    <property type="protein sequence ID" value="AAB02534.1"/>
    <property type="molecule type" value="Genomic_RNA"/>
</dbReference>
<dbReference type="EMBL" id="M21958">
    <property type="protein sequence ID" value="AAB02535.1"/>
    <property type="molecule type" value="Genomic_RNA"/>
</dbReference>
<dbReference type="PIR" id="A35315">
    <property type="entry name" value="RRVGCT"/>
</dbReference>
<dbReference type="RefSeq" id="NP_062897.1">
    <property type="nucleotide sequence ID" value="NC_001554.1"/>
</dbReference>
<dbReference type="RefSeq" id="NP_062898.1">
    <property type="nucleotide sequence ID" value="NC_001554.1"/>
</dbReference>
<dbReference type="KEGG" id="vg:1493955"/>
<dbReference type="KEGG" id="vg:1493956"/>
<dbReference type="Proteomes" id="UP000001666">
    <property type="component" value="Segment"/>
</dbReference>
<dbReference type="GO" id="GO:0000166">
    <property type="term" value="F:nucleotide binding"/>
    <property type="evidence" value="ECO:0007669"/>
    <property type="project" value="UniProtKB-KW"/>
</dbReference>
<dbReference type="GO" id="GO:0003723">
    <property type="term" value="F:RNA binding"/>
    <property type="evidence" value="ECO:0007669"/>
    <property type="project" value="InterPro"/>
</dbReference>
<dbReference type="GO" id="GO:0003968">
    <property type="term" value="F:RNA-directed RNA polymerase activity"/>
    <property type="evidence" value="ECO:0007669"/>
    <property type="project" value="UniProtKB-KW"/>
</dbReference>
<dbReference type="GO" id="GO:0039694">
    <property type="term" value="P:viral RNA genome replication"/>
    <property type="evidence" value="ECO:0007669"/>
    <property type="project" value="InterPro"/>
</dbReference>
<dbReference type="CDD" id="cd23236">
    <property type="entry name" value="Tombusvirus-like_RdRp"/>
    <property type="match status" value="1"/>
</dbReference>
<dbReference type="Gene3D" id="3.30.70.270">
    <property type="match status" value="1"/>
</dbReference>
<dbReference type="InterPro" id="IPR043502">
    <property type="entry name" value="DNA/RNA_pol_sf"/>
</dbReference>
<dbReference type="InterPro" id="IPR043128">
    <property type="entry name" value="Rev_trsase/Diguanyl_cyclase"/>
</dbReference>
<dbReference type="InterPro" id="IPR007094">
    <property type="entry name" value="RNA-dir_pol_PSvirus"/>
</dbReference>
<dbReference type="InterPro" id="IPR002166">
    <property type="entry name" value="RNA_pol_HCV"/>
</dbReference>
<dbReference type="InterPro" id="IPR013707">
    <property type="entry name" value="Tombusvirus_p33"/>
</dbReference>
<dbReference type="Pfam" id="PF00998">
    <property type="entry name" value="RdRP_3"/>
    <property type="match status" value="1"/>
</dbReference>
<dbReference type="Pfam" id="PF08500">
    <property type="entry name" value="Tombus_P33"/>
    <property type="match status" value="1"/>
</dbReference>
<dbReference type="SUPFAM" id="SSF56672">
    <property type="entry name" value="DNA/RNA polymerases"/>
    <property type="match status" value="1"/>
</dbReference>
<dbReference type="PROSITE" id="PS50507">
    <property type="entry name" value="RDRP_SSRNA_POS"/>
    <property type="match status" value="1"/>
</dbReference>
<keyword id="KW-0547">Nucleotide-binding</keyword>
<keyword id="KW-0548">Nucleotidyltransferase</keyword>
<keyword id="KW-1185">Reference proteome</keyword>
<keyword id="KW-1159">RNA suppression of termination</keyword>
<keyword id="KW-0696">RNA-directed RNA polymerase</keyword>
<keyword id="KW-0808">Transferase</keyword>
<keyword id="KW-0693">Viral RNA replication</keyword>
<protein>
    <recommendedName>
        <fullName>RNA-directed RNA polymerase</fullName>
        <ecNumber>2.7.7.48</ecNumber>
    </recommendedName>
    <alternativeName>
        <fullName>Protein p92</fullName>
    </alternativeName>
    <component>
        <recommendedName>
            <fullName>Protein p33</fullName>
        </recommendedName>
    </component>
</protein>
<name>RDRP_TBSVC</name>
<comment type="function">
    <text evidence="1">RNA-dependent RNA polymerase that plays an essential role in the virus replication.</text>
</comment>
<comment type="catalytic activity">
    <reaction evidence="2">
        <text>RNA(n) + a ribonucleoside 5'-triphosphate = RNA(n+1) + diphosphate</text>
        <dbReference type="Rhea" id="RHEA:21248"/>
        <dbReference type="Rhea" id="RHEA-COMP:14527"/>
        <dbReference type="Rhea" id="RHEA-COMP:17342"/>
        <dbReference type="ChEBI" id="CHEBI:33019"/>
        <dbReference type="ChEBI" id="CHEBI:61557"/>
        <dbReference type="ChEBI" id="CHEBI:140395"/>
        <dbReference type="EC" id="2.7.7.48"/>
    </reaction>
</comment>
<comment type="miscellaneous">
    <text evidence="3">Readthrough of the terminator UAG occurs at position 297.</text>
</comment>
<comment type="similarity">
    <text evidence="3">Belongs to the tombusviridae RNA polymerase family.</text>
</comment>
<evidence type="ECO:0000250" key="1">
    <source>
        <dbReference type="UniProtKB" id="P11640"/>
    </source>
</evidence>
<evidence type="ECO:0000255" key="2">
    <source>
        <dbReference type="PROSITE-ProRule" id="PRU00539"/>
    </source>
</evidence>
<evidence type="ECO:0000305" key="3"/>